<accession>A2A5I3</accession>
<name>CRSPL_MOUSE</name>
<feature type="signal peptide" evidence="2">
    <location>
        <begin position="1"/>
        <end position="23"/>
    </location>
</feature>
<feature type="propeptide" id="PRO_0000287637" evidence="1">
    <location>
        <begin position="24"/>
        <end position="56"/>
    </location>
</feature>
<feature type="chain" id="PRO_0000287638" description="Peptidase inhibitor R3HDML">
    <location>
        <begin position="57"/>
        <end position="253"/>
    </location>
</feature>
<feature type="domain" description="SCP">
    <location>
        <begin position="67"/>
        <end position="207"/>
    </location>
</feature>
<feature type="glycosylation site" description="N-linked (GlcNAc...) asparagine" evidence="2">
    <location>
        <position position="28"/>
    </location>
</feature>
<feature type="glycosylation site" description="N-linked (GlcNAc...) asparagine" evidence="2">
    <location>
        <position position="120"/>
    </location>
</feature>
<dbReference type="EMBL" id="AL591488">
    <property type="status" value="NOT_ANNOTATED_CDS"/>
    <property type="molecule type" value="Genomic_DNA"/>
</dbReference>
<dbReference type="CCDS" id="CCDS38316.1"/>
<dbReference type="RefSeq" id="NP_001092801.1">
    <property type="nucleotide sequence ID" value="NM_001099331.2"/>
</dbReference>
<dbReference type="RefSeq" id="XP_006498585.1">
    <property type="nucleotide sequence ID" value="XM_006498522.5"/>
</dbReference>
<dbReference type="SMR" id="A2A5I3"/>
<dbReference type="FunCoup" id="A2A5I3">
    <property type="interactions" value="61"/>
</dbReference>
<dbReference type="STRING" id="10090.ENSMUSP00000105043"/>
<dbReference type="GlyCosmos" id="A2A5I3">
    <property type="glycosylation" value="2 sites, No reported glycans"/>
</dbReference>
<dbReference type="GlyGen" id="A2A5I3">
    <property type="glycosylation" value="2 sites"/>
</dbReference>
<dbReference type="PaxDb" id="10090-ENSMUSP00000105043"/>
<dbReference type="Antibodypedia" id="76963">
    <property type="antibodies" value="30 antibodies from 9 providers"/>
</dbReference>
<dbReference type="Ensembl" id="ENSMUST00000109416.3">
    <property type="protein sequence ID" value="ENSMUSP00000105043.3"/>
    <property type="gene ID" value="ENSMUSG00000078949.3"/>
</dbReference>
<dbReference type="GeneID" id="100043899"/>
<dbReference type="KEGG" id="mmu:100043899"/>
<dbReference type="UCSC" id="uc008nsw.2">
    <property type="organism name" value="mouse"/>
</dbReference>
<dbReference type="AGR" id="MGI:3650937"/>
<dbReference type="CTD" id="140902"/>
<dbReference type="MGI" id="MGI:3650937">
    <property type="gene designation" value="R3hdml"/>
</dbReference>
<dbReference type="VEuPathDB" id="HostDB:ENSMUSG00000078949"/>
<dbReference type="eggNOG" id="KOG3017">
    <property type="taxonomic scope" value="Eukaryota"/>
</dbReference>
<dbReference type="GeneTree" id="ENSGT00940000161086"/>
<dbReference type="HOGENOM" id="CLU_035730_2_2_1"/>
<dbReference type="InParanoid" id="A2A5I3"/>
<dbReference type="OMA" id="CNSNMCF"/>
<dbReference type="OrthoDB" id="414826at2759"/>
<dbReference type="PhylomeDB" id="A2A5I3"/>
<dbReference type="TreeFam" id="TF316148"/>
<dbReference type="BioGRID-ORCS" id="100043899">
    <property type="hits" value="1 hit in 75 CRISPR screens"/>
</dbReference>
<dbReference type="PRO" id="PR:A2A5I3"/>
<dbReference type="Proteomes" id="UP000000589">
    <property type="component" value="Chromosome 2"/>
</dbReference>
<dbReference type="RNAct" id="A2A5I3">
    <property type="molecule type" value="protein"/>
</dbReference>
<dbReference type="Bgee" id="ENSMUSG00000078949">
    <property type="expression patterns" value="Expressed in lens of camera-type eye and 16 other cell types or tissues"/>
</dbReference>
<dbReference type="GO" id="GO:0005576">
    <property type="term" value="C:extracellular region"/>
    <property type="evidence" value="ECO:0007669"/>
    <property type="project" value="UniProtKB-SubCell"/>
</dbReference>
<dbReference type="GO" id="GO:0030414">
    <property type="term" value="F:peptidase inhibitor activity"/>
    <property type="evidence" value="ECO:0007669"/>
    <property type="project" value="UniProtKB-KW"/>
</dbReference>
<dbReference type="CDD" id="cd18815">
    <property type="entry name" value="CAP_R3HDML"/>
    <property type="match status" value="1"/>
</dbReference>
<dbReference type="FunFam" id="3.40.33.10:FF:000003">
    <property type="entry name" value="Peptidase inhibitor 15"/>
    <property type="match status" value="1"/>
</dbReference>
<dbReference type="Gene3D" id="3.40.33.10">
    <property type="entry name" value="CAP"/>
    <property type="match status" value="1"/>
</dbReference>
<dbReference type="InterPro" id="IPR014044">
    <property type="entry name" value="CAP_dom"/>
</dbReference>
<dbReference type="InterPro" id="IPR035940">
    <property type="entry name" value="CAP_sf"/>
</dbReference>
<dbReference type="InterPro" id="IPR001283">
    <property type="entry name" value="CRISP-related"/>
</dbReference>
<dbReference type="InterPro" id="IPR047899">
    <property type="entry name" value="R3HDML_CAP"/>
</dbReference>
<dbReference type="PANTHER" id="PTHR10334">
    <property type="entry name" value="CYSTEINE-RICH SECRETORY PROTEIN-RELATED"/>
    <property type="match status" value="1"/>
</dbReference>
<dbReference type="Pfam" id="PF00188">
    <property type="entry name" value="CAP"/>
    <property type="match status" value="1"/>
</dbReference>
<dbReference type="PRINTS" id="PR00837">
    <property type="entry name" value="V5TPXLIKE"/>
</dbReference>
<dbReference type="SMART" id="SM00198">
    <property type="entry name" value="SCP"/>
    <property type="match status" value="1"/>
</dbReference>
<dbReference type="SUPFAM" id="SSF55797">
    <property type="entry name" value="PR-1-like"/>
    <property type="match status" value="1"/>
</dbReference>
<reference key="1">
    <citation type="journal article" date="2009" name="PLoS Biol.">
        <title>Lineage-specific biology revealed by a finished genome assembly of the mouse.</title>
        <authorList>
            <person name="Church D.M."/>
            <person name="Goodstadt L."/>
            <person name="Hillier L.W."/>
            <person name="Zody M.C."/>
            <person name="Goldstein S."/>
            <person name="She X."/>
            <person name="Bult C.J."/>
            <person name="Agarwala R."/>
            <person name="Cherry J.L."/>
            <person name="DiCuccio M."/>
            <person name="Hlavina W."/>
            <person name="Kapustin Y."/>
            <person name="Meric P."/>
            <person name="Maglott D."/>
            <person name="Birtle Z."/>
            <person name="Marques A.C."/>
            <person name="Graves T."/>
            <person name="Zhou S."/>
            <person name="Teague B."/>
            <person name="Potamousis K."/>
            <person name="Churas C."/>
            <person name="Place M."/>
            <person name="Herschleb J."/>
            <person name="Runnheim R."/>
            <person name="Forrest D."/>
            <person name="Amos-Landgraf J."/>
            <person name="Schwartz D.C."/>
            <person name="Cheng Z."/>
            <person name="Lindblad-Toh K."/>
            <person name="Eichler E.E."/>
            <person name="Ponting C.P."/>
        </authorList>
    </citation>
    <scope>NUCLEOTIDE SEQUENCE [LARGE SCALE GENOMIC DNA]</scope>
    <source>
        <strain>C57BL/6J</strain>
    </source>
</reference>
<organism>
    <name type="scientific">Mus musculus</name>
    <name type="common">Mouse</name>
    <dbReference type="NCBI Taxonomy" id="10090"/>
    <lineage>
        <taxon>Eukaryota</taxon>
        <taxon>Metazoa</taxon>
        <taxon>Chordata</taxon>
        <taxon>Craniata</taxon>
        <taxon>Vertebrata</taxon>
        <taxon>Euteleostomi</taxon>
        <taxon>Mammalia</taxon>
        <taxon>Eutheria</taxon>
        <taxon>Euarchontoglires</taxon>
        <taxon>Glires</taxon>
        <taxon>Rodentia</taxon>
        <taxon>Myomorpha</taxon>
        <taxon>Muroidea</taxon>
        <taxon>Muridae</taxon>
        <taxon>Murinae</taxon>
        <taxon>Mus</taxon>
        <taxon>Mus</taxon>
    </lineage>
</organism>
<gene>
    <name type="primary">R3hdml</name>
</gene>
<evidence type="ECO:0000250" key="1"/>
<evidence type="ECO:0000255" key="2"/>
<evidence type="ECO:0000305" key="3"/>
<comment type="function">
    <text evidence="1">Putative serine protease inhibitor.</text>
</comment>
<comment type="subcellular location">
    <subcellularLocation>
        <location evidence="3">Secreted</location>
    </subcellularLocation>
</comment>
<comment type="similarity">
    <text evidence="3">Belongs to the CRISP family.</text>
</comment>
<comment type="caution">
    <text evidence="3">Despite its name, it does not contain a R3H domain.</text>
</comment>
<proteinExistence type="inferred from homology"/>
<sequence>MPLLSSIVGLTGLLLWMGHTVGALRMPNTTLVQGRPKNTAVWPLSGLGVPRHRRKRHISARDMSALLDYHNHIRASVHPPAANMEYMVWDEQLARSAEAWATQCIWTHGPSQLMKYVGQNLSIHSGRFRSVVDLVRSWSEEKRHYSFPAPKDCTPHCPWLCSGPVCSHYTQMVWASSSRLGCAINTCSSINVWGNTWQQAVYLVCNYAIKGNWIGEAPYKAGKPCSACPPSYQGNCNSNMCFSGLKSNRLPWV</sequence>
<protein>
    <recommendedName>
        <fullName>Peptidase inhibitor R3HDML</fullName>
    </recommendedName>
    <alternativeName>
        <fullName>Cysteine-rich secretory protein R3HDML</fullName>
    </alternativeName>
</protein>
<keyword id="KW-0325">Glycoprotein</keyword>
<keyword id="KW-0646">Protease inhibitor</keyword>
<keyword id="KW-1185">Reference proteome</keyword>
<keyword id="KW-0964">Secreted</keyword>
<keyword id="KW-0732">Signal</keyword>